<sequence length="263" mass="29791">MNVDIDTETGSSFSITIDFGETVLQIKEKIEKSQGIPVSKQILYLDGKALEDDLHKIDYMILFESLLLRISPDADPNQSNEQTEQSKQIDDKKQEFCGIQDSSESKKLTRVMARRVHNVYSSLPAYSLDELLGPKYSATVTVGGRTNQVVQTTEQASTSGTAKEVLRDSDSPVEKKIKTNPMKFTVHVKPYQEDTKMIQVEVNADDNVEELRKELVKMQERGELNLPHEAFHLVSSELPLIETKSFKWNRVADGDTIELIREK</sequence>
<accession>Q9ZQZ6</accession>
<accession>E0Y427</accession>
<protein>
    <recommendedName>
        <fullName evidence="8">Ubiquitin domain-containing protein 7SL RNA2</fullName>
        <shortName evidence="6">At7SL-2</shortName>
    </recommendedName>
    <alternativeName>
        <fullName evidence="5">Protein ETERNALLY VEGETATIVE PHASE 1</fullName>
    </alternativeName>
</protein>
<proteinExistence type="evidence at protein level"/>
<gene>
    <name evidence="6" type="primary">7SL2</name>
    <name evidence="5" type="synonym">EVE1</name>
    <name evidence="9" type="ordered locus">At4g03350</name>
    <name evidence="10" type="ORF">F4C21.29</name>
</gene>
<organism>
    <name type="scientific">Arabidopsis thaliana</name>
    <name type="common">Mouse-ear cress</name>
    <dbReference type="NCBI Taxonomy" id="3702"/>
    <lineage>
        <taxon>Eukaryota</taxon>
        <taxon>Viridiplantae</taxon>
        <taxon>Streptophyta</taxon>
        <taxon>Embryophyta</taxon>
        <taxon>Tracheophyta</taxon>
        <taxon>Spermatophyta</taxon>
        <taxon>Magnoliopsida</taxon>
        <taxon>eudicotyledons</taxon>
        <taxon>Gunneridae</taxon>
        <taxon>Pentapetalae</taxon>
        <taxon>rosids</taxon>
        <taxon>malvids</taxon>
        <taxon>Brassicales</taxon>
        <taxon>Brassicaceae</taxon>
        <taxon>Camelineae</taxon>
        <taxon>Arabidopsis</taxon>
    </lineage>
</organism>
<feature type="chain" id="PRO_0000442013" description="Ubiquitin domain-containing protein 7SL RNA2">
    <location>
        <begin position="1"/>
        <end position="263"/>
    </location>
</feature>
<feature type="domain" description="Ubiquitin-like 1" evidence="1">
    <location>
        <begin position="1"/>
        <end position="53"/>
    </location>
</feature>
<feature type="domain" description="Ubiquitin-like 2" evidence="1">
    <location>
        <begin position="184"/>
        <end position="263"/>
    </location>
</feature>
<feature type="region of interest" description="Disordered" evidence="2">
    <location>
        <begin position="74"/>
        <end position="93"/>
    </location>
</feature>
<feature type="compositionally biased region" description="Polar residues" evidence="2">
    <location>
        <begin position="76"/>
        <end position="86"/>
    </location>
</feature>
<feature type="sequence conflict" description="In Ref. 2; ADM21180." evidence="7" ref="2">
    <location>
        <position position="52"/>
    </location>
</feature>
<feature type="sequence conflict" description="In Ref. 2; ADM21180." evidence="7" ref="2">
    <original>L</original>
    <variation>H</variation>
    <location>
        <position position="66"/>
    </location>
</feature>
<feature type="sequence conflict" description="In Ref. 2; ADM21180." evidence="7" ref="2">
    <original>T</original>
    <variation>A</variation>
    <location>
        <position position="141"/>
    </location>
</feature>
<reference key="1">
    <citation type="journal article" date="1993" name="Nucleic Acids Res.">
        <title>Sequence of the Arabidopsis thaliana 7SL RNA gene.</title>
        <authorList>
            <person name="Marques J.P."/>
            <person name="Gualberto J.M."/>
            <person name="Palme K."/>
        </authorList>
    </citation>
    <scope>NUCLEOTIDE SEQUENCE [GENOMIC DNA]</scope>
</reference>
<reference key="2">
    <citation type="journal article" date="2010" name="Nat. Genet.">
        <title>Natural variation at strubbelig receptor kinase 3 drives immune-triggered incompatibilities between Arabidopsis thaliana accessions.</title>
        <authorList>
            <person name="Alcazar R."/>
            <person name="Garcia A.V."/>
            <person name="Kronholm I."/>
            <person name="de Meaux J."/>
            <person name="Koornneef M."/>
            <person name="Parker J.E."/>
            <person name="Reymond M."/>
        </authorList>
    </citation>
    <scope>NUCLEOTIDE SEQUENCE [GENOMIC DNA]</scope>
    <source>
        <strain>cv. Kas-2</strain>
    </source>
</reference>
<reference key="3">
    <citation type="journal article" date="1999" name="Nature">
        <title>Sequence and analysis of chromosome 4 of the plant Arabidopsis thaliana.</title>
        <authorList>
            <person name="Mayer K.F.X."/>
            <person name="Schueller C."/>
            <person name="Wambutt R."/>
            <person name="Murphy G."/>
            <person name="Volckaert G."/>
            <person name="Pohl T."/>
            <person name="Duesterhoeft A."/>
            <person name="Stiekema W."/>
            <person name="Entian K.-D."/>
            <person name="Terryn N."/>
            <person name="Harris B."/>
            <person name="Ansorge W."/>
            <person name="Brandt P."/>
            <person name="Grivell L.A."/>
            <person name="Rieger M."/>
            <person name="Weichselgartner M."/>
            <person name="de Simone V."/>
            <person name="Obermaier B."/>
            <person name="Mache R."/>
            <person name="Mueller M."/>
            <person name="Kreis M."/>
            <person name="Delseny M."/>
            <person name="Puigdomenech P."/>
            <person name="Watson M."/>
            <person name="Schmidtheini T."/>
            <person name="Reichert B."/>
            <person name="Portetelle D."/>
            <person name="Perez-Alonso M."/>
            <person name="Boutry M."/>
            <person name="Bancroft I."/>
            <person name="Vos P."/>
            <person name="Hoheisel J."/>
            <person name="Zimmermann W."/>
            <person name="Wedler H."/>
            <person name="Ridley P."/>
            <person name="Langham S.-A."/>
            <person name="McCullagh B."/>
            <person name="Bilham L."/>
            <person name="Robben J."/>
            <person name="van der Schueren J."/>
            <person name="Grymonprez B."/>
            <person name="Chuang Y.-J."/>
            <person name="Vandenbussche F."/>
            <person name="Braeken M."/>
            <person name="Weltjens I."/>
            <person name="Voet M."/>
            <person name="Bastiaens I."/>
            <person name="Aert R."/>
            <person name="Defoor E."/>
            <person name="Weitzenegger T."/>
            <person name="Bothe G."/>
            <person name="Ramsperger U."/>
            <person name="Hilbert H."/>
            <person name="Braun M."/>
            <person name="Holzer E."/>
            <person name="Brandt A."/>
            <person name="Peters S."/>
            <person name="van Staveren M."/>
            <person name="Dirkse W."/>
            <person name="Mooijman P."/>
            <person name="Klein Lankhorst R."/>
            <person name="Rose M."/>
            <person name="Hauf J."/>
            <person name="Koetter P."/>
            <person name="Berneiser S."/>
            <person name="Hempel S."/>
            <person name="Feldpausch M."/>
            <person name="Lamberth S."/>
            <person name="Van den Daele H."/>
            <person name="De Keyser A."/>
            <person name="Buysshaert C."/>
            <person name="Gielen J."/>
            <person name="Villarroel R."/>
            <person name="De Clercq R."/>
            <person name="van Montagu M."/>
            <person name="Rogers J."/>
            <person name="Cronin A."/>
            <person name="Quail M.A."/>
            <person name="Bray-Allen S."/>
            <person name="Clark L."/>
            <person name="Doggett J."/>
            <person name="Hall S."/>
            <person name="Kay M."/>
            <person name="Lennard N."/>
            <person name="McLay K."/>
            <person name="Mayes R."/>
            <person name="Pettett A."/>
            <person name="Rajandream M.A."/>
            <person name="Lyne M."/>
            <person name="Benes V."/>
            <person name="Rechmann S."/>
            <person name="Borkova D."/>
            <person name="Bloecker H."/>
            <person name="Scharfe M."/>
            <person name="Grimm M."/>
            <person name="Loehnert T.-H."/>
            <person name="Dose S."/>
            <person name="de Haan M."/>
            <person name="Maarse A.C."/>
            <person name="Schaefer M."/>
            <person name="Mueller-Auer S."/>
            <person name="Gabel C."/>
            <person name="Fuchs M."/>
            <person name="Fartmann B."/>
            <person name="Granderath K."/>
            <person name="Dauner D."/>
            <person name="Herzl A."/>
            <person name="Neumann S."/>
            <person name="Argiriou A."/>
            <person name="Vitale D."/>
            <person name="Liguori R."/>
            <person name="Piravandi E."/>
            <person name="Massenet O."/>
            <person name="Quigley F."/>
            <person name="Clabauld G."/>
            <person name="Muendlein A."/>
            <person name="Felber R."/>
            <person name="Schnabl S."/>
            <person name="Hiller R."/>
            <person name="Schmidt W."/>
            <person name="Lecharny A."/>
            <person name="Aubourg S."/>
            <person name="Chefdor F."/>
            <person name="Cooke R."/>
            <person name="Berger C."/>
            <person name="Monfort A."/>
            <person name="Casacuberta E."/>
            <person name="Gibbons T."/>
            <person name="Weber N."/>
            <person name="Vandenbol M."/>
            <person name="Bargues M."/>
            <person name="Terol J."/>
            <person name="Torres A."/>
            <person name="Perez-Perez A."/>
            <person name="Purnelle B."/>
            <person name="Bent E."/>
            <person name="Johnson S."/>
            <person name="Tacon D."/>
            <person name="Jesse T."/>
            <person name="Heijnen L."/>
            <person name="Schwarz S."/>
            <person name="Scholler P."/>
            <person name="Heber S."/>
            <person name="Francs P."/>
            <person name="Bielke C."/>
            <person name="Frishman D."/>
            <person name="Haase D."/>
            <person name="Lemcke K."/>
            <person name="Mewes H.-W."/>
            <person name="Stocker S."/>
            <person name="Zaccaria P."/>
            <person name="Bevan M."/>
            <person name="Wilson R.K."/>
            <person name="de la Bastide M."/>
            <person name="Habermann K."/>
            <person name="Parnell L."/>
            <person name="Dedhia N."/>
            <person name="Gnoj L."/>
            <person name="Schutz K."/>
            <person name="Huang E."/>
            <person name="Spiegel L."/>
            <person name="Sekhon M."/>
            <person name="Murray J."/>
            <person name="Sheet P."/>
            <person name="Cordes M."/>
            <person name="Abu-Threideh J."/>
            <person name="Stoneking T."/>
            <person name="Kalicki J."/>
            <person name="Graves T."/>
            <person name="Harmon G."/>
            <person name="Edwards J."/>
            <person name="Latreille P."/>
            <person name="Courtney L."/>
            <person name="Cloud J."/>
            <person name="Abbott A."/>
            <person name="Scott K."/>
            <person name="Johnson D."/>
            <person name="Minx P."/>
            <person name="Bentley D."/>
            <person name="Fulton B."/>
            <person name="Miller N."/>
            <person name="Greco T."/>
            <person name="Kemp K."/>
            <person name="Kramer J."/>
            <person name="Fulton L."/>
            <person name="Mardis E."/>
            <person name="Dante M."/>
            <person name="Pepin K."/>
            <person name="Hillier L.W."/>
            <person name="Nelson J."/>
            <person name="Spieth J."/>
            <person name="Ryan E."/>
            <person name="Andrews S."/>
            <person name="Geisel C."/>
            <person name="Layman D."/>
            <person name="Du H."/>
            <person name="Ali J."/>
            <person name="Berghoff A."/>
            <person name="Jones K."/>
            <person name="Drone K."/>
            <person name="Cotton M."/>
            <person name="Joshu C."/>
            <person name="Antonoiu B."/>
            <person name="Zidanic M."/>
            <person name="Strong C."/>
            <person name="Sun H."/>
            <person name="Lamar B."/>
            <person name="Yordan C."/>
            <person name="Ma P."/>
            <person name="Zhong J."/>
            <person name="Preston R."/>
            <person name="Vil D."/>
            <person name="Shekher M."/>
            <person name="Matero A."/>
            <person name="Shah R."/>
            <person name="Swaby I.K."/>
            <person name="O'Shaughnessy A."/>
            <person name="Rodriguez M."/>
            <person name="Hoffman J."/>
            <person name="Till S."/>
            <person name="Granat S."/>
            <person name="Shohdy N."/>
            <person name="Hasegawa A."/>
            <person name="Hameed A."/>
            <person name="Lodhi M."/>
            <person name="Johnson A."/>
            <person name="Chen E."/>
            <person name="Marra M.A."/>
            <person name="Martienssen R."/>
            <person name="McCombie W.R."/>
        </authorList>
    </citation>
    <scope>NUCLEOTIDE SEQUENCE [LARGE SCALE GENOMIC DNA]</scope>
    <source>
        <strain>cv. Columbia</strain>
    </source>
</reference>
<reference key="4">
    <citation type="journal article" date="2017" name="Plant J.">
        <title>Araport11: a complete reannotation of the Arabidopsis thaliana reference genome.</title>
        <authorList>
            <person name="Cheng C.Y."/>
            <person name="Krishnakumar V."/>
            <person name="Chan A.P."/>
            <person name="Thibaud-Nissen F."/>
            <person name="Schobel S."/>
            <person name="Town C.D."/>
        </authorList>
    </citation>
    <scope>GENOME REANNOTATION</scope>
    <source>
        <strain>cv. Columbia</strain>
    </source>
</reference>
<reference key="5">
    <citation type="journal article" date="2005" name="Plant J.">
        <title>Plant 7SL RNA genes belong to type 4 of RNA polymerase III- dependent genes that are composed of mixed promoters.</title>
        <authorList>
            <person name="Yukawa Y."/>
            <person name="Felis M."/>
            <person name="Englert M."/>
            <person name="Stojanov M."/>
            <person name="Matousek J."/>
            <person name="Beier H."/>
            <person name="Sugiura M."/>
        </authorList>
    </citation>
    <scope>MISCELLANEOUS</scope>
</reference>
<reference key="6">
    <citation type="journal article" date="2011" name="J. Exp. Bot.">
        <title>Overexpression of EVE1, a novel ubiquitin family protein, arrests inflorescence stem development in Arabidopsis.</title>
        <authorList>
            <person name="Hwang H.-J."/>
            <person name="Kim H."/>
            <person name="Jeong Y.-M."/>
            <person name="Choi M.Y."/>
            <person name="Lee S.-Y."/>
            <person name="Kim S.-G."/>
        </authorList>
    </citation>
    <scope>FUNCTION</scope>
    <scope>TISSUE SPECIFICITY</scope>
    <scope>SUBCELLULAR LOCATION</scope>
    <source>
        <strain>cv. Columbia</strain>
    </source>
</reference>
<dbReference type="EMBL" id="X72229">
    <property type="status" value="NOT_ANNOTATED_CDS"/>
    <property type="molecule type" value="Genomic_DNA"/>
</dbReference>
<dbReference type="EMBL" id="GU571158">
    <property type="protein sequence ID" value="ADM21180.1"/>
    <property type="molecule type" value="Genomic_DNA"/>
</dbReference>
<dbReference type="EMBL" id="AC005275">
    <property type="protein sequence ID" value="AAD14463.1"/>
    <property type="molecule type" value="Genomic_DNA"/>
</dbReference>
<dbReference type="EMBL" id="AL161496">
    <property type="protein sequence ID" value="CAB77820.1"/>
    <property type="molecule type" value="Genomic_DNA"/>
</dbReference>
<dbReference type="EMBL" id="CP002687">
    <property type="protein sequence ID" value="AEE82309.1"/>
    <property type="molecule type" value="Genomic_DNA"/>
</dbReference>
<dbReference type="PIR" id="E85042">
    <property type="entry name" value="E85042"/>
</dbReference>
<dbReference type="RefSeq" id="NP_192244.1">
    <property type="nucleotide sequence ID" value="NM_116573.1"/>
</dbReference>
<dbReference type="SMR" id="Q9ZQZ6"/>
<dbReference type="FunCoup" id="Q9ZQZ6">
    <property type="interactions" value="7"/>
</dbReference>
<dbReference type="STRING" id="3702.Q9ZQZ6"/>
<dbReference type="PaxDb" id="3702-AT4G03350.1"/>
<dbReference type="ProteomicsDB" id="236481"/>
<dbReference type="EnsemblPlants" id="AT4G03350.1">
    <property type="protein sequence ID" value="AT4G03350.1"/>
    <property type="gene ID" value="AT4G03350"/>
</dbReference>
<dbReference type="GeneID" id="827964"/>
<dbReference type="Gramene" id="AT4G03350.1">
    <property type="protein sequence ID" value="AT4G03350.1"/>
    <property type="gene ID" value="AT4G03350"/>
</dbReference>
<dbReference type="KEGG" id="ath:AT4G03350"/>
<dbReference type="Araport" id="AT4G03350"/>
<dbReference type="TAIR" id="AT4G03350">
    <property type="gene designation" value="EVE1"/>
</dbReference>
<dbReference type="eggNOG" id="KOG0001">
    <property type="taxonomic scope" value="Eukaryota"/>
</dbReference>
<dbReference type="HOGENOM" id="CLU_085519_1_0_1"/>
<dbReference type="InParanoid" id="Q9ZQZ6"/>
<dbReference type="PhylomeDB" id="Q9ZQZ6"/>
<dbReference type="PRO" id="PR:Q9ZQZ6"/>
<dbReference type="Proteomes" id="UP000006548">
    <property type="component" value="Chromosome 4"/>
</dbReference>
<dbReference type="ExpressionAtlas" id="Q9ZQZ6">
    <property type="expression patterns" value="baseline"/>
</dbReference>
<dbReference type="GO" id="GO:0005634">
    <property type="term" value="C:nucleus"/>
    <property type="evidence" value="ECO:0000314"/>
    <property type="project" value="TAIR"/>
</dbReference>
<dbReference type="GO" id="GO:0009908">
    <property type="term" value="P:flower development"/>
    <property type="evidence" value="ECO:0007669"/>
    <property type="project" value="UniProtKB-KW"/>
</dbReference>
<dbReference type="GO" id="GO:0048366">
    <property type="term" value="P:leaf development"/>
    <property type="evidence" value="ECO:0000315"/>
    <property type="project" value="TAIR"/>
</dbReference>
<dbReference type="GO" id="GO:0010228">
    <property type="term" value="P:vegetative to reproductive phase transition of meristem"/>
    <property type="evidence" value="ECO:0000315"/>
    <property type="project" value="TAIR"/>
</dbReference>
<dbReference type="CDD" id="cd17039">
    <property type="entry name" value="Ubl_ubiquitin_like"/>
    <property type="match status" value="1"/>
</dbReference>
<dbReference type="FunFam" id="3.10.20.90:FF:000636">
    <property type="entry name" value="Ubiquitin domain-containing protein 7SL RNA2"/>
    <property type="match status" value="1"/>
</dbReference>
<dbReference type="Gene3D" id="3.10.20.90">
    <property type="entry name" value="Phosphatidylinositol 3-kinase Catalytic Subunit, Chain A, domain 1"/>
    <property type="match status" value="1"/>
</dbReference>
<dbReference type="InterPro" id="IPR000626">
    <property type="entry name" value="Ubiquitin-like_dom"/>
</dbReference>
<dbReference type="InterPro" id="IPR029071">
    <property type="entry name" value="Ubiquitin-like_domsf"/>
</dbReference>
<dbReference type="PANTHER" id="PTHR10621:SF38">
    <property type="entry name" value="UBIQUITIN DOMAIN-CONTAINING PROTEIN 7SL RNA1-RELATED"/>
    <property type="match status" value="1"/>
</dbReference>
<dbReference type="PANTHER" id="PTHR10621">
    <property type="entry name" value="UV EXCISION REPAIR PROTEIN RAD23"/>
    <property type="match status" value="1"/>
</dbReference>
<dbReference type="Pfam" id="PF00240">
    <property type="entry name" value="ubiquitin"/>
    <property type="match status" value="1"/>
</dbReference>
<dbReference type="SMART" id="SM00213">
    <property type="entry name" value="UBQ"/>
    <property type="match status" value="2"/>
</dbReference>
<dbReference type="SUPFAM" id="SSF54236">
    <property type="entry name" value="Ubiquitin-like"/>
    <property type="match status" value="2"/>
</dbReference>
<dbReference type="PROSITE" id="PS50053">
    <property type="entry name" value="UBIQUITIN_2"/>
    <property type="match status" value="2"/>
</dbReference>
<name>R7SL2_ARATH</name>
<evidence type="ECO:0000255" key="1">
    <source>
        <dbReference type="PROSITE-ProRule" id="PRU00214"/>
    </source>
</evidence>
<evidence type="ECO:0000256" key="2">
    <source>
        <dbReference type="SAM" id="MobiDB-lite"/>
    </source>
</evidence>
<evidence type="ECO:0000269" key="3">
    <source>
    </source>
</evidence>
<evidence type="ECO:0000269" key="4">
    <source>
    </source>
</evidence>
<evidence type="ECO:0000303" key="5">
    <source>
    </source>
</evidence>
<evidence type="ECO:0000303" key="6">
    <source>
    </source>
</evidence>
<evidence type="ECO:0000305" key="7"/>
<evidence type="ECO:0000305" key="8">
    <source>
    </source>
</evidence>
<evidence type="ECO:0000312" key="9">
    <source>
        <dbReference type="Araport" id="AT4G03350"/>
    </source>
</evidence>
<evidence type="ECO:0000312" key="10">
    <source>
        <dbReference type="EMBL" id="AAD14463.1"/>
    </source>
</evidence>
<keyword id="KW-0217">Developmental protein</keyword>
<keyword id="KW-0287">Flowering</keyword>
<keyword id="KW-0539">Nucleus</keyword>
<keyword id="KW-1185">Reference proteome</keyword>
<keyword id="KW-0677">Repeat</keyword>
<comment type="function">
    <text evidence="4">Controls phase transition from the vegetative to the reproductive state. Involved in the maintenance of the shoot apical meristem (SAM) thus preventing inflorescence meristem (IM) formation and subsequent inflorescence stem development during flowering. Regulates leaf and organ morphology.</text>
</comment>
<comment type="subcellular location">
    <subcellularLocation>
        <location evidence="4">Nucleus</location>
    </subcellularLocation>
</comment>
<comment type="tissue specificity">
    <text evidence="4">Expressed in seedlings, roots, stems, rosettes and flowers (at protein level).</text>
</comment>
<comment type="miscellaneous">
    <text evidence="3">Transcribed by RNA polymerase III (pol III).</text>
</comment>
<comment type="similarity">
    <text evidence="7">Belongs to the ubiquitin family.</text>
</comment>
<comment type="sequence caution" evidence="7">
    <conflict type="frameshift">
        <sequence resource="EMBL" id="X72229"/>
    </conflict>
</comment>